<organism>
    <name type="scientific">Gallus gallus</name>
    <name type="common">Chicken</name>
    <dbReference type="NCBI Taxonomy" id="9031"/>
    <lineage>
        <taxon>Eukaryota</taxon>
        <taxon>Metazoa</taxon>
        <taxon>Chordata</taxon>
        <taxon>Craniata</taxon>
        <taxon>Vertebrata</taxon>
        <taxon>Euteleostomi</taxon>
        <taxon>Archelosauria</taxon>
        <taxon>Archosauria</taxon>
        <taxon>Dinosauria</taxon>
        <taxon>Saurischia</taxon>
        <taxon>Theropoda</taxon>
        <taxon>Coelurosauria</taxon>
        <taxon>Aves</taxon>
        <taxon>Neognathae</taxon>
        <taxon>Galloanserae</taxon>
        <taxon>Galliformes</taxon>
        <taxon>Phasianidae</taxon>
        <taxon>Phasianinae</taxon>
        <taxon>Gallus</taxon>
    </lineage>
</organism>
<protein>
    <recommendedName>
        <fullName>Zinc finger and BTB domain-containing protein 14</fullName>
    </recommendedName>
    <alternativeName>
        <fullName>Zinc finger protein 161 homolog</fullName>
        <shortName>Zfp-161</shortName>
    </alternativeName>
    <alternativeName>
        <fullName>Zinc finger protein 5</fullName>
        <shortName>ZF5</shortName>
    </alternativeName>
</protein>
<comment type="function">
    <text evidence="1">Transcriptional activator of the dopamine transporter (DAT), binding it's promoter at the consensus sequence 5'-CCTGCACAGTTCACGGA-3'. Binds to 5'-d(GCC)(n)-3' trinucleotide repeats in promoter regions and acts as a repressor of the FMR1 gene. Transcriptional repressor of MYC and thymidine kinase promoters (By similarity).</text>
</comment>
<comment type="subunit">
    <text evidence="1">Interacts with ZBTB21.</text>
</comment>
<comment type="subcellular location">
    <subcellularLocation>
        <location evidence="1">Nucleus</location>
    </subcellularLocation>
</comment>
<comment type="domain">
    <text evidence="1">The BTB/POZ domain seems to direct the protein to discrete regions in the nucleus.</text>
</comment>
<comment type="similarity">
    <text evidence="6">Belongs to the krueppel C2H2-type zinc-finger protein family.</text>
</comment>
<proteinExistence type="evidence at transcript level"/>
<sequence>MEFFISMSETIKYNDDDHKTVFLKTLNEQRLEGEFCDIAIVVEDVKFRAHRCVLAACSTYFKKLFKKLEVDSSSVIEIDFLRSDIFEEVLNYMYTAKISVKKEDVNLMMSSGQILGIRFLDKLCSQKRDVSSPEENTQSKSKYCLKINRPIGEPNDTQDDEVEEIGDHDDSPSDVTVEGTPPSQEDGKSPTTTLRVQEAILKELGSEEVRKVNCYGQEVESMETTESKDLGSQTPQALTFNDGISEVKDEQTPGWTTAAGDMKFEYLLYGHREHIVCQACGKTFSDEARLRKHEKLHTADRPFVCEMCTKGFTTQAHLKEHLKIHTGYKPYSCEVCGKSFIRAPDLKKHERVHSNERPFACHMCDKAFKHKSHLKDHERRHRGEKPFVCGSCTKAFAKASDLKRHENNMHSERKQVTTANSIQSETEQLQAAAMAREAEQQLETIACS</sequence>
<reference key="1">
    <citation type="journal article" date="1996" name="Biochim. Biophys. Acta">
        <title>Genomic and cDNA structures of the gene encoding the chicken ZF5 DNA binding protein.</title>
        <authorList>
            <person name="Bhathal H.S."/>
            <person name="Stumph W.E."/>
        </authorList>
    </citation>
    <scope>NUCLEOTIDE SEQUENCE [GENOMIC DNA / MRNA]</scope>
    <source>
        <tissue>Muscle</tissue>
    </source>
</reference>
<accession>Q92010</accession>
<feature type="chain" id="PRO_0000047319" description="Zinc finger and BTB domain-containing protein 14">
    <location>
        <begin position="1"/>
        <end position="448"/>
    </location>
</feature>
<feature type="domain" description="BTB" evidence="3">
    <location>
        <begin position="36"/>
        <end position="102"/>
    </location>
</feature>
<feature type="zinc finger region" description="C2H2-type 1" evidence="4">
    <location>
        <begin position="275"/>
        <end position="302"/>
    </location>
</feature>
<feature type="zinc finger region" description="C2H2-type 2" evidence="4">
    <location>
        <begin position="303"/>
        <end position="330"/>
    </location>
</feature>
<feature type="zinc finger region" description="C2H2-type 3" evidence="4">
    <location>
        <begin position="331"/>
        <end position="358"/>
    </location>
</feature>
<feature type="zinc finger region" description="C2H2-type 4" evidence="4">
    <location>
        <begin position="359"/>
        <end position="386"/>
    </location>
</feature>
<feature type="zinc finger region" description="C2H2-type 5" evidence="4">
    <location>
        <begin position="387"/>
        <end position="415"/>
    </location>
</feature>
<feature type="region of interest" description="Disordered" evidence="5">
    <location>
        <begin position="130"/>
        <end position="193"/>
    </location>
</feature>
<feature type="region of interest" description="Disordered" evidence="5">
    <location>
        <begin position="404"/>
        <end position="425"/>
    </location>
</feature>
<feature type="short sequence motif" description="Nuclear localization signal" evidence="2">
    <location>
        <begin position="50"/>
        <end position="66"/>
    </location>
</feature>
<feature type="compositionally biased region" description="Acidic residues" evidence="5">
    <location>
        <begin position="156"/>
        <end position="167"/>
    </location>
</feature>
<feature type="compositionally biased region" description="Basic and acidic residues" evidence="5">
    <location>
        <begin position="404"/>
        <end position="415"/>
    </location>
</feature>
<feature type="compositionally biased region" description="Polar residues" evidence="5">
    <location>
        <begin position="416"/>
        <end position="425"/>
    </location>
</feature>
<dbReference type="EMBL" id="U51641">
    <property type="protein sequence ID" value="AAB38388.1"/>
    <property type="molecule type" value="mRNA"/>
</dbReference>
<dbReference type="EMBL" id="U51640">
    <property type="protein sequence ID" value="AAB38387.1"/>
    <property type="molecule type" value="Genomic_DNA"/>
</dbReference>
<dbReference type="PIR" id="S71427">
    <property type="entry name" value="S71427"/>
</dbReference>
<dbReference type="RefSeq" id="NP_990492.1">
    <property type="nucleotide sequence ID" value="NM_205161.1"/>
</dbReference>
<dbReference type="SMR" id="Q92010"/>
<dbReference type="FunCoup" id="Q92010">
    <property type="interactions" value="1350"/>
</dbReference>
<dbReference type="STRING" id="9031.ENSGALP00000043813"/>
<dbReference type="PaxDb" id="9031-ENSGALP00000023787"/>
<dbReference type="GeneID" id="396070"/>
<dbReference type="KEGG" id="gga:396070"/>
<dbReference type="CTD" id="7541"/>
<dbReference type="VEuPathDB" id="HostDB:geneid_396070"/>
<dbReference type="eggNOG" id="KOG1721">
    <property type="taxonomic scope" value="Eukaryota"/>
</dbReference>
<dbReference type="InParanoid" id="Q92010"/>
<dbReference type="OrthoDB" id="6425912at2759"/>
<dbReference type="PhylomeDB" id="Q92010"/>
<dbReference type="PRO" id="PR:Q92010"/>
<dbReference type="Proteomes" id="UP000000539">
    <property type="component" value="Unassembled WGS sequence"/>
</dbReference>
<dbReference type="GO" id="GO:0005654">
    <property type="term" value="C:nucleoplasm"/>
    <property type="evidence" value="ECO:0000318"/>
    <property type="project" value="GO_Central"/>
</dbReference>
<dbReference type="GO" id="GO:0005634">
    <property type="term" value="C:nucleus"/>
    <property type="evidence" value="ECO:0000250"/>
    <property type="project" value="UniProtKB"/>
</dbReference>
<dbReference type="GO" id="GO:0003700">
    <property type="term" value="F:DNA-binding transcription factor activity"/>
    <property type="evidence" value="ECO:0000250"/>
    <property type="project" value="UniProtKB"/>
</dbReference>
<dbReference type="GO" id="GO:0001227">
    <property type="term" value="F:DNA-binding transcription repressor activity, RNA polymerase II-specific"/>
    <property type="evidence" value="ECO:0000318"/>
    <property type="project" value="GO_Central"/>
</dbReference>
<dbReference type="GO" id="GO:0000978">
    <property type="term" value="F:RNA polymerase II cis-regulatory region sequence-specific DNA binding"/>
    <property type="evidence" value="ECO:0000318"/>
    <property type="project" value="GO_Central"/>
</dbReference>
<dbReference type="GO" id="GO:0043565">
    <property type="term" value="F:sequence-specific DNA binding"/>
    <property type="evidence" value="ECO:0000250"/>
    <property type="project" value="UniProtKB"/>
</dbReference>
<dbReference type="GO" id="GO:0000976">
    <property type="term" value="F:transcription cis-regulatory region binding"/>
    <property type="evidence" value="ECO:0000250"/>
    <property type="project" value="UniProtKB"/>
</dbReference>
<dbReference type="GO" id="GO:0008270">
    <property type="term" value="F:zinc ion binding"/>
    <property type="evidence" value="ECO:0007669"/>
    <property type="project" value="UniProtKB-KW"/>
</dbReference>
<dbReference type="GO" id="GO:0045892">
    <property type="term" value="P:negative regulation of DNA-templated transcription"/>
    <property type="evidence" value="ECO:0000250"/>
    <property type="project" value="UniProtKB"/>
</dbReference>
<dbReference type="GO" id="GO:0000122">
    <property type="term" value="P:negative regulation of transcription by RNA polymerase II"/>
    <property type="evidence" value="ECO:0000318"/>
    <property type="project" value="GO_Central"/>
</dbReference>
<dbReference type="GO" id="GO:0001817">
    <property type="term" value="P:regulation of cytokine production"/>
    <property type="evidence" value="ECO:0000318"/>
    <property type="project" value="GO_Central"/>
</dbReference>
<dbReference type="GO" id="GO:0002682">
    <property type="term" value="P:regulation of immune system process"/>
    <property type="evidence" value="ECO:0000318"/>
    <property type="project" value="GO_Central"/>
</dbReference>
<dbReference type="CDD" id="cd18204">
    <property type="entry name" value="BTB_POZ_ZBTB14"/>
    <property type="match status" value="1"/>
</dbReference>
<dbReference type="FunFam" id="3.30.160.60:FF:000147">
    <property type="entry name" value="POZ-, AT hook-, and zinc finger-containing protein 1"/>
    <property type="match status" value="1"/>
</dbReference>
<dbReference type="FunFam" id="3.30.160.60:FF:000316">
    <property type="entry name" value="Zinc finger and BTB domain-containing 14"/>
    <property type="match status" value="1"/>
</dbReference>
<dbReference type="FunFam" id="3.30.160.60:FF:000762">
    <property type="entry name" value="Zinc finger and BTB domain-containing 14"/>
    <property type="match status" value="1"/>
</dbReference>
<dbReference type="FunFam" id="3.30.160.60:FF:000766">
    <property type="entry name" value="Zinc finger and BTB domain-containing 14"/>
    <property type="match status" value="1"/>
</dbReference>
<dbReference type="FunFam" id="3.30.710.10:FF:000054">
    <property type="entry name" value="Zinc finger and BTB domain-containing protein 14"/>
    <property type="match status" value="1"/>
</dbReference>
<dbReference type="FunFam" id="3.30.160.60:FF:000145">
    <property type="entry name" value="Zinc finger protein 574"/>
    <property type="match status" value="1"/>
</dbReference>
<dbReference type="Gene3D" id="3.30.160.60">
    <property type="entry name" value="Classic Zinc Finger"/>
    <property type="match status" value="5"/>
</dbReference>
<dbReference type="Gene3D" id="3.30.710.10">
    <property type="entry name" value="Potassium Channel Kv1.1, Chain A"/>
    <property type="match status" value="1"/>
</dbReference>
<dbReference type="InterPro" id="IPR000210">
    <property type="entry name" value="BTB/POZ_dom"/>
</dbReference>
<dbReference type="InterPro" id="IPR011333">
    <property type="entry name" value="SKP1/BTB/POZ_sf"/>
</dbReference>
<dbReference type="InterPro" id="IPR036236">
    <property type="entry name" value="Znf_C2H2_sf"/>
</dbReference>
<dbReference type="InterPro" id="IPR013087">
    <property type="entry name" value="Znf_C2H2_type"/>
</dbReference>
<dbReference type="InterPro" id="IPR050457">
    <property type="entry name" value="ZnFinger_BTB_dom_contain"/>
</dbReference>
<dbReference type="PANTHER" id="PTHR46105">
    <property type="entry name" value="AGAP004733-PA"/>
    <property type="match status" value="1"/>
</dbReference>
<dbReference type="PANTHER" id="PTHR46105:SF5">
    <property type="entry name" value="ZINC FINGER AND BTB DOMAIN-CONTAINING PROTEIN 44 ISOFORM X1"/>
    <property type="match status" value="1"/>
</dbReference>
<dbReference type="Pfam" id="PF00651">
    <property type="entry name" value="BTB"/>
    <property type="match status" value="1"/>
</dbReference>
<dbReference type="Pfam" id="PF00096">
    <property type="entry name" value="zf-C2H2"/>
    <property type="match status" value="5"/>
</dbReference>
<dbReference type="SMART" id="SM00225">
    <property type="entry name" value="BTB"/>
    <property type="match status" value="1"/>
</dbReference>
<dbReference type="SMART" id="SM00355">
    <property type="entry name" value="ZnF_C2H2"/>
    <property type="match status" value="5"/>
</dbReference>
<dbReference type="SUPFAM" id="SSF57667">
    <property type="entry name" value="beta-beta-alpha zinc fingers"/>
    <property type="match status" value="3"/>
</dbReference>
<dbReference type="SUPFAM" id="SSF54695">
    <property type="entry name" value="POZ domain"/>
    <property type="match status" value="1"/>
</dbReference>
<dbReference type="PROSITE" id="PS50097">
    <property type="entry name" value="BTB"/>
    <property type="match status" value="1"/>
</dbReference>
<dbReference type="PROSITE" id="PS00028">
    <property type="entry name" value="ZINC_FINGER_C2H2_1"/>
    <property type="match status" value="5"/>
</dbReference>
<dbReference type="PROSITE" id="PS50157">
    <property type="entry name" value="ZINC_FINGER_C2H2_2"/>
    <property type="match status" value="5"/>
</dbReference>
<keyword id="KW-0238">DNA-binding</keyword>
<keyword id="KW-0479">Metal-binding</keyword>
<keyword id="KW-0539">Nucleus</keyword>
<keyword id="KW-1185">Reference proteome</keyword>
<keyword id="KW-0677">Repeat</keyword>
<keyword id="KW-0678">Repressor</keyword>
<keyword id="KW-0804">Transcription</keyword>
<keyword id="KW-0805">Transcription regulation</keyword>
<keyword id="KW-0862">Zinc</keyword>
<keyword id="KW-0863">Zinc-finger</keyword>
<name>ZBT14_CHICK</name>
<evidence type="ECO:0000250" key="1"/>
<evidence type="ECO:0000255" key="2"/>
<evidence type="ECO:0000255" key="3">
    <source>
        <dbReference type="PROSITE-ProRule" id="PRU00037"/>
    </source>
</evidence>
<evidence type="ECO:0000255" key="4">
    <source>
        <dbReference type="PROSITE-ProRule" id="PRU00042"/>
    </source>
</evidence>
<evidence type="ECO:0000256" key="5">
    <source>
        <dbReference type="SAM" id="MobiDB-lite"/>
    </source>
</evidence>
<evidence type="ECO:0000305" key="6"/>
<gene>
    <name type="primary">ZBTB14</name>
    <name type="synonym">ZFP161</name>
</gene>